<proteinExistence type="inferred from homology"/>
<name>RBFA_HALH5</name>
<evidence type="ECO:0000255" key="1">
    <source>
        <dbReference type="HAMAP-Rule" id="MF_00003"/>
    </source>
</evidence>
<protein>
    <recommendedName>
        <fullName evidence="1">Ribosome-binding factor A</fullName>
    </recommendedName>
</protein>
<gene>
    <name evidence="1" type="primary">rbfA</name>
    <name type="ordered locus">BH2411</name>
</gene>
<accession>Q9KA79</accession>
<organism>
    <name type="scientific">Halalkalibacterium halodurans (strain ATCC BAA-125 / DSM 18197 / FERM 7344 / JCM 9153 / C-125)</name>
    <name type="common">Bacillus halodurans</name>
    <dbReference type="NCBI Taxonomy" id="272558"/>
    <lineage>
        <taxon>Bacteria</taxon>
        <taxon>Bacillati</taxon>
        <taxon>Bacillota</taxon>
        <taxon>Bacilli</taxon>
        <taxon>Bacillales</taxon>
        <taxon>Bacillaceae</taxon>
        <taxon>Halalkalibacterium (ex Joshi et al. 2022)</taxon>
    </lineage>
</organism>
<keyword id="KW-0963">Cytoplasm</keyword>
<keyword id="KW-1185">Reference proteome</keyword>
<keyword id="KW-0690">Ribosome biogenesis</keyword>
<dbReference type="EMBL" id="BA000004">
    <property type="protein sequence ID" value="BAB06130.1"/>
    <property type="molecule type" value="Genomic_DNA"/>
</dbReference>
<dbReference type="PIR" id="C83951">
    <property type="entry name" value="C83951"/>
</dbReference>
<dbReference type="RefSeq" id="WP_010898564.1">
    <property type="nucleotide sequence ID" value="NC_002570.2"/>
</dbReference>
<dbReference type="SMR" id="Q9KA79"/>
<dbReference type="STRING" id="272558.gene:10728309"/>
<dbReference type="GeneID" id="87597931"/>
<dbReference type="KEGG" id="bha:BH2411"/>
<dbReference type="eggNOG" id="COG0858">
    <property type="taxonomic scope" value="Bacteria"/>
</dbReference>
<dbReference type="HOGENOM" id="CLU_089475_6_3_9"/>
<dbReference type="OrthoDB" id="307788at2"/>
<dbReference type="Proteomes" id="UP000001258">
    <property type="component" value="Chromosome"/>
</dbReference>
<dbReference type="GO" id="GO:0005829">
    <property type="term" value="C:cytosol"/>
    <property type="evidence" value="ECO:0007669"/>
    <property type="project" value="TreeGrafter"/>
</dbReference>
<dbReference type="GO" id="GO:0043024">
    <property type="term" value="F:ribosomal small subunit binding"/>
    <property type="evidence" value="ECO:0007669"/>
    <property type="project" value="TreeGrafter"/>
</dbReference>
<dbReference type="GO" id="GO:0030490">
    <property type="term" value="P:maturation of SSU-rRNA"/>
    <property type="evidence" value="ECO:0007669"/>
    <property type="project" value="UniProtKB-UniRule"/>
</dbReference>
<dbReference type="FunFam" id="3.30.300.20:FF:000009">
    <property type="entry name" value="Ribosome-binding factor A"/>
    <property type="match status" value="1"/>
</dbReference>
<dbReference type="Gene3D" id="3.30.300.20">
    <property type="match status" value="1"/>
</dbReference>
<dbReference type="HAMAP" id="MF_00003">
    <property type="entry name" value="RbfA"/>
    <property type="match status" value="1"/>
</dbReference>
<dbReference type="InterPro" id="IPR015946">
    <property type="entry name" value="KH_dom-like_a/b"/>
</dbReference>
<dbReference type="InterPro" id="IPR000238">
    <property type="entry name" value="RbfA"/>
</dbReference>
<dbReference type="InterPro" id="IPR023799">
    <property type="entry name" value="RbfA_dom_sf"/>
</dbReference>
<dbReference type="InterPro" id="IPR020053">
    <property type="entry name" value="Ribosome-bd_factorA_CS"/>
</dbReference>
<dbReference type="NCBIfam" id="TIGR00082">
    <property type="entry name" value="rbfA"/>
    <property type="match status" value="1"/>
</dbReference>
<dbReference type="PANTHER" id="PTHR33515">
    <property type="entry name" value="RIBOSOME-BINDING FACTOR A, CHLOROPLASTIC-RELATED"/>
    <property type="match status" value="1"/>
</dbReference>
<dbReference type="PANTHER" id="PTHR33515:SF1">
    <property type="entry name" value="RIBOSOME-BINDING FACTOR A, CHLOROPLASTIC-RELATED"/>
    <property type="match status" value="1"/>
</dbReference>
<dbReference type="Pfam" id="PF02033">
    <property type="entry name" value="RBFA"/>
    <property type="match status" value="1"/>
</dbReference>
<dbReference type="SUPFAM" id="SSF89919">
    <property type="entry name" value="Ribosome-binding factor A, RbfA"/>
    <property type="match status" value="1"/>
</dbReference>
<dbReference type="PROSITE" id="PS01319">
    <property type="entry name" value="RBFA"/>
    <property type="match status" value="1"/>
</dbReference>
<comment type="function">
    <text evidence="1">One of several proteins that assist in the late maturation steps of the functional core of the 30S ribosomal subunit. Associates with free 30S ribosomal subunits (but not with 30S subunits that are part of 70S ribosomes or polysomes). Required for efficient processing of 16S rRNA. May interact with the 5'-terminal helix region of 16S rRNA.</text>
</comment>
<comment type="subunit">
    <text evidence="1">Monomer. Binds 30S ribosomal subunits, but not 50S ribosomal subunits or 70S ribosomes.</text>
</comment>
<comment type="subcellular location">
    <subcellularLocation>
        <location evidence="1">Cytoplasm</location>
    </subcellularLocation>
</comment>
<comment type="similarity">
    <text evidence="1">Belongs to the RbfA family.</text>
</comment>
<reference key="1">
    <citation type="journal article" date="2000" name="Nucleic Acids Res.">
        <title>Complete genome sequence of the alkaliphilic bacterium Bacillus halodurans and genomic sequence comparison with Bacillus subtilis.</title>
        <authorList>
            <person name="Takami H."/>
            <person name="Nakasone K."/>
            <person name="Takaki Y."/>
            <person name="Maeno G."/>
            <person name="Sasaki R."/>
            <person name="Masui N."/>
            <person name="Fuji F."/>
            <person name="Hirama C."/>
            <person name="Nakamura Y."/>
            <person name="Ogasawara N."/>
            <person name="Kuhara S."/>
            <person name="Horikoshi K."/>
        </authorList>
    </citation>
    <scope>NUCLEOTIDE SEQUENCE [LARGE SCALE GENOMIC DNA]</scope>
    <source>
        <strain>ATCC BAA-125 / DSM 18197 / FERM 7344 / JCM 9153 / C-125</strain>
    </source>
</reference>
<feature type="chain" id="PRO_0000102617" description="Ribosome-binding factor A">
    <location>
        <begin position="1"/>
        <end position="116"/>
    </location>
</feature>
<sequence length="116" mass="13318">MSNVRANRVGEQMKKELSDIFMRELKDPRIEFVTVTGVDVTGDLQQANVYITVLGDDEQKEATLAGLSKAKGFIRSEIGKRIRLRKTPELFFHFDESIEYGNRIEKLLQDINRDGE</sequence>